<name>FETP_LARHH</name>
<protein>
    <recommendedName>
        <fullName evidence="1">Probable Fe(2+)-trafficking protein</fullName>
    </recommendedName>
</protein>
<organism>
    <name type="scientific">Laribacter hongkongensis (strain HLHK9)</name>
    <dbReference type="NCBI Taxonomy" id="557598"/>
    <lineage>
        <taxon>Bacteria</taxon>
        <taxon>Pseudomonadati</taxon>
        <taxon>Pseudomonadota</taxon>
        <taxon>Betaproteobacteria</taxon>
        <taxon>Neisseriales</taxon>
        <taxon>Aquaspirillaceae</taxon>
        <taxon>Laribacter</taxon>
    </lineage>
</organism>
<gene>
    <name type="ordered locus">LHK_00654</name>
</gene>
<comment type="function">
    <text evidence="1">Could be a mediator in iron transactions between iron acquisition and iron-requiring processes, such as synthesis and/or repair of Fe-S clusters in biosynthetic enzymes.</text>
</comment>
<comment type="similarity">
    <text evidence="1">Belongs to the Fe(2+)-trafficking protein family.</text>
</comment>
<dbReference type="EMBL" id="CP001154">
    <property type="protein sequence ID" value="ACO73647.1"/>
    <property type="molecule type" value="Genomic_DNA"/>
</dbReference>
<dbReference type="RefSeq" id="WP_012696139.1">
    <property type="nucleotide sequence ID" value="NC_012559.1"/>
</dbReference>
<dbReference type="SMR" id="C1DD12"/>
<dbReference type="STRING" id="557598.LHK_00654"/>
<dbReference type="KEGG" id="lhk:LHK_00654"/>
<dbReference type="eggNOG" id="COG2924">
    <property type="taxonomic scope" value="Bacteria"/>
</dbReference>
<dbReference type="HOGENOM" id="CLU_170994_0_0_4"/>
<dbReference type="Proteomes" id="UP000002010">
    <property type="component" value="Chromosome"/>
</dbReference>
<dbReference type="GO" id="GO:0005829">
    <property type="term" value="C:cytosol"/>
    <property type="evidence" value="ECO:0007669"/>
    <property type="project" value="TreeGrafter"/>
</dbReference>
<dbReference type="GO" id="GO:0005506">
    <property type="term" value="F:iron ion binding"/>
    <property type="evidence" value="ECO:0007669"/>
    <property type="project" value="UniProtKB-UniRule"/>
</dbReference>
<dbReference type="GO" id="GO:0034599">
    <property type="term" value="P:cellular response to oxidative stress"/>
    <property type="evidence" value="ECO:0007669"/>
    <property type="project" value="TreeGrafter"/>
</dbReference>
<dbReference type="FunFam" id="1.10.3880.10:FF:000001">
    <property type="entry name" value="Probable Fe(2+)-trafficking protein"/>
    <property type="match status" value="1"/>
</dbReference>
<dbReference type="Gene3D" id="1.10.3880.10">
    <property type="entry name" value="Fe(II) trafficking protein YggX"/>
    <property type="match status" value="1"/>
</dbReference>
<dbReference type="HAMAP" id="MF_00686">
    <property type="entry name" value="Fe_traffic_YggX"/>
    <property type="match status" value="1"/>
</dbReference>
<dbReference type="InterPro" id="IPR007457">
    <property type="entry name" value="Fe_traffick_prot_YggX"/>
</dbReference>
<dbReference type="InterPro" id="IPR036766">
    <property type="entry name" value="Fe_traffick_prot_YggX_sf"/>
</dbReference>
<dbReference type="NCBIfam" id="NF003817">
    <property type="entry name" value="PRK05408.1"/>
    <property type="match status" value="1"/>
</dbReference>
<dbReference type="PANTHER" id="PTHR36965">
    <property type="entry name" value="FE(2+)-TRAFFICKING PROTEIN-RELATED"/>
    <property type="match status" value="1"/>
</dbReference>
<dbReference type="PANTHER" id="PTHR36965:SF1">
    <property type="entry name" value="FE(2+)-TRAFFICKING PROTEIN-RELATED"/>
    <property type="match status" value="1"/>
</dbReference>
<dbReference type="Pfam" id="PF04362">
    <property type="entry name" value="Iron_traffic"/>
    <property type="match status" value="1"/>
</dbReference>
<dbReference type="PIRSF" id="PIRSF029827">
    <property type="entry name" value="Fe_traffic_YggX"/>
    <property type="match status" value="1"/>
</dbReference>
<dbReference type="SUPFAM" id="SSF111148">
    <property type="entry name" value="YggX-like"/>
    <property type="match status" value="1"/>
</dbReference>
<feature type="chain" id="PRO_1000147768" description="Probable Fe(2+)-trafficking protein">
    <location>
        <begin position="1"/>
        <end position="90"/>
    </location>
</feature>
<accession>C1DD12</accession>
<sequence>MARMVQCIKLGREAEGLDFPPLPGELGKKVYENVSKEAWQAWLRHQTMLINENRLNLADSRARQYLTQQLQNYFFGTGADMPAGFVPPSV</sequence>
<reference key="1">
    <citation type="journal article" date="2009" name="PLoS Genet.">
        <title>The complete genome and proteome of Laribacter hongkongensis reveal potential mechanisms for adaptations to different temperatures and habitats.</title>
        <authorList>
            <person name="Woo P.C.Y."/>
            <person name="Lau S.K.P."/>
            <person name="Tse H."/>
            <person name="Teng J.L.L."/>
            <person name="Curreem S.O."/>
            <person name="Tsang A.K.L."/>
            <person name="Fan R.Y.Y."/>
            <person name="Wong G.K.M."/>
            <person name="Huang Y."/>
            <person name="Loman N.J."/>
            <person name="Snyder L.A.S."/>
            <person name="Cai J.J."/>
            <person name="Huang J.-D."/>
            <person name="Mak W."/>
            <person name="Pallen M.J."/>
            <person name="Lok S."/>
            <person name="Yuen K.-Y."/>
        </authorList>
    </citation>
    <scope>NUCLEOTIDE SEQUENCE [LARGE SCALE GENOMIC DNA]</scope>
    <source>
        <strain>HLHK9</strain>
    </source>
</reference>
<keyword id="KW-0408">Iron</keyword>
<keyword id="KW-1185">Reference proteome</keyword>
<proteinExistence type="inferred from homology"/>
<evidence type="ECO:0000255" key="1">
    <source>
        <dbReference type="HAMAP-Rule" id="MF_00686"/>
    </source>
</evidence>